<evidence type="ECO:0000255" key="1"/>
<evidence type="ECO:0000256" key="2">
    <source>
        <dbReference type="SAM" id="MobiDB-lite"/>
    </source>
</evidence>
<evidence type="ECO:0000269" key="3">
    <source>
    </source>
</evidence>
<evidence type="ECO:0000269" key="4">
    <source>
    </source>
</evidence>
<evidence type="ECO:0000269" key="5">
    <source>
    </source>
</evidence>
<evidence type="ECO:0000269" key="6">
    <source>
    </source>
</evidence>
<evidence type="ECO:0000269" key="7">
    <source>
    </source>
</evidence>
<evidence type="ECO:0000269" key="8">
    <source>
    </source>
</evidence>
<evidence type="ECO:0000269" key="9">
    <source>
    </source>
</evidence>
<evidence type="ECO:0000305" key="10"/>
<evidence type="ECO:0000312" key="11">
    <source>
        <dbReference type="EMBL" id="AAB54001.1"/>
    </source>
</evidence>
<evidence type="ECO:0000312" key="12">
    <source>
        <dbReference type="EMBL" id="AAL28466.1"/>
    </source>
</evidence>
<evidence type="ECO:0000312" key="13">
    <source>
        <dbReference type="EMBL" id="AAM27487.1"/>
    </source>
</evidence>
<evidence type="ECO:0000312" key="14">
    <source>
        <dbReference type="EMBL" id="ABW09405.1"/>
    </source>
</evidence>
<evidence type="ECO:0000312" key="15">
    <source>
        <dbReference type="FlyBase" id="FBgn0265630"/>
    </source>
</evidence>
<comment type="function">
    <text evidence="4 5 8 9">Notch pathway component, may contribute to the specificity between lateral and inductive Notch signaling pathways in the wing disk. Required during many developmental stages including oogenesis, embryogenesis and imaginal development of the eye, wing and leg. Ebi and sno regulate EGFR-dependent Delta transcription in the developing eye, by antagonizing a repressor function of Suppressor of Hairless (Su(H)). They are required in the R-cells for normal cone cell development.</text>
</comment>
<comment type="subunit">
    <text evidence="4 5">Interacts with vg for function in the wing disk. Interacts with Su(H) for function in the eye disk.</text>
</comment>
<comment type="subcellular location">
    <subcellularLocation>
        <location evidence="9">Nucleus</location>
    </subcellularLocation>
</comment>
<comment type="alternative products">
    <event type="alternative splicing"/>
    <isoform>
        <id>A8JUV0-4</id>
        <name evidence="15">B</name>
        <sequence type="displayed"/>
    </isoform>
    <isoform>
        <id>A8JUV0-3</id>
        <name evidence="15">A</name>
        <sequence type="described" ref="VSP_058149"/>
    </isoform>
</comment>
<comment type="tissue specificity">
    <text evidence="4 5 9">At stage 8, when the formation of the midline precursor cells depends on Notch signaling, high level of expression is seen in the midline precursor cells and a lower level in the surrounding epidermal cells. Between stages 11 and 14, expression is uniform throughout the epidermis, and at stage 16, high level of expression is restricted to the central nervous system. Expressed in the larval leg, wing and eye imaginal disks. Expression is over the wing disk and accumulates within the pleural region.</text>
</comment>
<comment type="developmental stage">
    <text evidence="8 9">Expressed both maternally and zygotically. First detected at the syncytial blastoderm stage.</text>
</comment>
<comment type="disruption phenotype">
    <text evidence="9">Loss of wingless, vestigial, cut, and E(spl)-m8 expression at the dorsal/ventral (D/V) boundary of the wing disk causing improper boundary specification. This causes defective wing pouch development and consequent thickening of wing veins.</text>
</comment>
<comment type="similarity">
    <text evidence="1">Belongs to the SBNO family.</text>
</comment>
<comment type="sequence caution" evidence="10">
    <conflict type="miscellaneous discrepancy">
        <sequence resource="EMBL-CDS" id="AAL28466"/>
    </conflict>
    <text>Intron retention.</text>
</comment>
<comment type="sequence caution" evidence="10">
    <conflict type="erroneous initiation">
        <sequence resource="EMBL-CDS" id="AAM27487"/>
    </conflict>
    <text>Truncated N-terminus.</text>
</comment>
<accession>A8JUV0</accession>
<accession>A8JUU9</accession>
<accession>O01940</accession>
<accession>Q8MZI4</accession>
<accession>Q95S83</accession>
<accession>Q9VYF7</accession>
<dbReference type="EMBL" id="U95760">
    <property type="protein sequence ID" value="AAB54001.1"/>
    <property type="molecule type" value="mRNA"/>
</dbReference>
<dbReference type="EMBL" id="AE014298">
    <property type="protein sequence ID" value="AAF48240.1"/>
    <property type="molecule type" value="Genomic_DNA"/>
</dbReference>
<dbReference type="EMBL" id="AE014298">
    <property type="protein sequence ID" value="ABW09405.1"/>
    <property type="molecule type" value="Genomic_DNA"/>
</dbReference>
<dbReference type="EMBL" id="AY060918">
    <property type="protein sequence ID" value="AAL28466.1"/>
    <property type="status" value="ALT_SEQ"/>
    <property type="molecule type" value="mRNA"/>
</dbReference>
<dbReference type="EMBL" id="AY102658">
    <property type="protein sequence ID" value="AAM27487.1"/>
    <property type="status" value="ALT_INIT"/>
    <property type="molecule type" value="mRNA"/>
</dbReference>
<dbReference type="PIR" id="T13847">
    <property type="entry name" value="T13847"/>
</dbReference>
<dbReference type="RefSeq" id="NP_001096967.1">
    <molecule id="A8JUV0-4"/>
    <property type="nucleotide sequence ID" value="NM_001103497.2"/>
</dbReference>
<dbReference type="RefSeq" id="NP_511144.2">
    <molecule id="A8JUV0-3"/>
    <property type="nucleotide sequence ID" value="NM_078589.4"/>
</dbReference>
<dbReference type="BioGRID" id="58658">
    <property type="interactions" value="13"/>
</dbReference>
<dbReference type="FunCoup" id="A8JUV0">
    <property type="interactions" value="2165"/>
</dbReference>
<dbReference type="IntAct" id="A8JUV0">
    <property type="interactions" value="4"/>
</dbReference>
<dbReference type="STRING" id="7227.FBpp0309425"/>
<dbReference type="GlyGen" id="A8JUV0">
    <property type="glycosylation" value="3 sites, 1 O-linked glycan (1 site)"/>
</dbReference>
<dbReference type="iPTMnet" id="A8JUV0"/>
<dbReference type="PaxDb" id="7227-FBpp0111762"/>
<dbReference type="DNASU" id="32273"/>
<dbReference type="EnsemblMetazoa" id="FBtr0340488">
    <molecule id="A8JUV0-3"/>
    <property type="protein sequence ID" value="FBpp0309424"/>
    <property type="gene ID" value="FBgn0265630"/>
</dbReference>
<dbReference type="EnsemblMetazoa" id="FBtr0340489">
    <molecule id="A8JUV0-4"/>
    <property type="protein sequence ID" value="FBpp0309425"/>
    <property type="gene ID" value="FBgn0265630"/>
</dbReference>
<dbReference type="GeneID" id="32273"/>
<dbReference type="KEGG" id="dme:Dmel_CG44436"/>
<dbReference type="AGR" id="FB:FBgn0265630"/>
<dbReference type="CTD" id="20622"/>
<dbReference type="FlyBase" id="FBgn0265630">
    <property type="gene designation" value="sno"/>
</dbReference>
<dbReference type="VEuPathDB" id="VectorBase:FBgn0265630"/>
<dbReference type="eggNOG" id="KOG1513">
    <property type="taxonomic scope" value="Eukaryota"/>
</dbReference>
<dbReference type="GeneTree" id="ENSGT00940000167724"/>
<dbReference type="InParanoid" id="A8JUV0"/>
<dbReference type="OMA" id="VSQMWMN"/>
<dbReference type="OrthoDB" id="421838at2759"/>
<dbReference type="BioGRID-ORCS" id="32273">
    <property type="hits" value="1 hit in 3 CRISPR screens"/>
</dbReference>
<dbReference type="GenomeRNAi" id="32273"/>
<dbReference type="PRO" id="PR:A8JUV0"/>
<dbReference type="Proteomes" id="UP000000803">
    <property type="component" value="Chromosome X"/>
</dbReference>
<dbReference type="Bgee" id="FBgn0265630">
    <property type="expression patterns" value="Expressed in adult olfactory receptor neuron Gr21a/63a (Drosophila) in antenna and 285 other cell types or tissues"/>
</dbReference>
<dbReference type="GO" id="GO:0005634">
    <property type="term" value="C:nucleus"/>
    <property type="evidence" value="ECO:0000314"/>
    <property type="project" value="UniProtKB"/>
</dbReference>
<dbReference type="GO" id="GO:0031490">
    <property type="term" value="F:chromatin DNA binding"/>
    <property type="evidence" value="ECO:0000318"/>
    <property type="project" value="GO_Central"/>
</dbReference>
<dbReference type="GO" id="GO:0042393">
    <property type="term" value="F:histone binding"/>
    <property type="evidence" value="ECO:0000318"/>
    <property type="project" value="GO_Central"/>
</dbReference>
<dbReference type="GO" id="GO:0008587">
    <property type="term" value="P:imaginal disc-derived wing margin morphogenesis"/>
    <property type="evidence" value="ECO:0000315"/>
    <property type="project" value="FlyBase"/>
</dbReference>
<dbReference type="GO" id="GO:0007219">
    <property type="term" value="P:Notch signaling pathway"/>
    <property type="evidence" value="ECO:0000315"/>
    <property type="project" value="UniProtKB"/>
</dbReference>
<dbReference type="GO" id="GO:0042461">
    <property type="term" value="P:photoreceptor cell development"/>
    <property type="evidence" value="ECO:0000315"/>
    <property type="project" value="FlyBase"/>
</dbReference>
<dbReference type="GO" id="GO:0045747">
    <property type="term" value="P:positive regulation of Notch signaling pathway"/>
    <property type="evidence" value="ECO:0000316"/>
    <property type="project" value="FlyBase"/>
</dbReference>
<dbReference type="GO" id="GO:0045944">
    <property type="term" value="P:positive regulation of transcription by RNA polymerase II"/>
    <property type="evidence" value="ECO:0000315"/>
    <property type="project" value="FlyBase"/>
</dbReference>
<dbReference type="GO" id="GO:0006355">
    <property type="term" value="P:regulation of DNA-templated transcription"/>
    <property type="evidence" value="ECO:0000318"/>
    <property type="project" value="GO_Central"/>
</dbReference>
<dbReference type="GO" id="GO:0048190">
    <property type="term" value="P:wing disc dorsal/ventral pattern formation"/>
    <property type="evidence" value="ECO:0000315"/>
    <property type="project" value="UniProtKB"/>
</dbReference>
<dbReference type="FunFam" id="3.40.50.300:FF:000282">
    <property type="entry name" value="Strawberry notch homolog 1 (Drosophila)"/>
    <property type="match status" value="1"/>
</dbReference>
<dbReference type="Gene3D" id="3.40.50.300">
    <property type="entry name" value="P-loop containing nucleotide triphosphate hydrolases"/>
    <property type="match status" value="2"/>
</dbReference>
<dbReference type="InterPro" id="IPR027417">
    <property type="entry name" value="P-loop_NTPase"/>
</dbReference>
<dbReference type="InterPro" id="IPR026937">
    <property type="entry name" value="SBNO_Helicase_C_dom"/>
</dbReference>
<dbReference type="InterPro" id="IPR026741">
    <property type="entry name" value="SNO"/>
</dbReference>
<dbReference type="InterPro" id="IPR039187">
    <property type="entry name" value="SNO_AAA"/>
</dbReference>
<dbReference type="PANTHER" id="PTHR12706:SF30">
    <property type="entry name" value="PROTEIN STRAWBERRY NOTCH-RELATED"/>
    <property type="match status" value="1"/>
</dbReference>
<dbReference type="PANTHER" id="PTHR12706">
    <property type="entry name" value="STRAWBERRY NOTCH-RELATED"/>
    <property type="match status" value="1"/>
</dbReference>
<dbReference type="Pfam" id="PF13872">
    <property type="entry name" value="AAA_34"/>
    <property type="match status" value="1"/>
</dbReference>
<dbReference type="Pfam" id="PF13871">
    <property type="entry name" value="Helicase_C_4"/>
    <property type="match status" value="1"/>
</dbReference>
<dbReference type="Pfam" id="PF25373">
    <property type="entry name" value="SBNO"/>
    <property type="match status" value="1"/>
</dbReference>
<dbReference type="SUPFAM" id="SSF52540">
    <property type="entry name" value="P-loop containing nucleoside triphosphate hydrolases"/>
    <property type="match status" value="2"/>
</dbReference>
<proteinExistence type="evidence at protein level"/>
<sequence length="1653" mass="180376">MTSKKRKTLLDADDDNDNFDEDDSGSDFDDDEDPDQIEVPGGGRDLNTAVTYAQNIRSGVGVAPKGGIPIPISGAKIVVGNNKIKPISLLRINNNNNNIVTSVNNRNNNNIISTNGSSNNNNNSINNNSQIIKTTTVTTTPTTVGATPTVGGVALGGKLTVIPIAGRNVALDNNLSNMPKKLNNMVTAMGSPAARSSGNAGTTGSSQGGAIGSTSSYLNSLTTNELMNLAAYVAAKGSNAPPPPPPSTAANSVRHSPTGGIPNPGGNFFGGSAAASTSASAANFNMAASLLAQMSYAGGASQIRALKVAGNIGGVGNNQKPPPIATTPGSGGPAGGAPGSGVKGNNSMMEAVQKLIAMNPEYLTSGIPNTVFQMFMQSMQRPQATPSPNQPMNPGAMVTSAAAAAAHASAVAYVQQEEDEVDYEEMGVAETYADYWPAKLKLGKKHPDAVVETASLSSVEPCDVYYKLSLPLETINSGHLSALQLESITYASQAHDHLLPDGSRAGFLIGDGAGVGKGRTIAGIIYENYLKGRKKALWISVSNDLKYDAERDLSDIGATRIEVHALNKFKYAKISSDVNNNCKRGVIFSTYSALIGESNNKTGKYRSRFRQLLQWCGEDFEGLIIFDECHKAKNLCPVGSGKPTKTGQTVLELQQKLPKARVVYASATGASEPKNMAYMVRLGLWGQGTAFGNFNDFITAVERRGVGAMEIVAMDMKLRGMYIARQLSFKGVSFKIEEVPLSKEFRKIYDQSVELWVEAMQKFTEAAELIDAESRMKKTMWGQFWSSHQRFFKYLCIAAKVNHAVLVARESIKYGKCVVIGLQSTGEARTLDQLERDDGELTDFVSTAKGVFQSFVERHFPAPDRNRINRILGLYDETPSLSSVADSTSSLSNNSNITTAAGKRKGSNNNDNRSTKIKKKKRSGSWECSDSEDENTDMKRNRKRDGGNSNSDSDEANSDDDLKSDIDDEDEDHDVDSDQRSVASDASSDFNPFFSGSDSDIDPWVNARSKKSKKAQKKSKKKVKKEKTKKEITTSSATDPSGSTAMSATVVAALNAVKNRKSQLSTQDKIQDLLQKKQELKGTVTPVGVNGVKLNYGPPPKDAIERACTMKEELLRKIERLGARLPPNTLDQLIDELGGPDNVAEMTGRRGRVVQTDDGSIQYESRTESDVPLETLNITEKQRFMDGEKDVAIISEAASSGISLQSDRRVFNQRRRVHITLELPWSADRAIQQFGRTHRSNQVNAPEYIFLISDLAGERRFASTVAKRLESLGALTHGDRRATETRDLSQFNIDNKYGRQALETVMRTIMGYESPLVPPPTDYSGEFFKDIAGALVGVGIIVNSESHPGVLSLDKDYNNISKFLNRILGCPVDLQNRLFKYFTDTMTAIIQQAKRGGRFDLGILDLGAAGENVTRVRLIRFVRKHATGVAPTEMHTVRVERGMIWQEAIDKYADLFNENEGFYLSHQLRNQKRTAIMVVILESRNSSSTSSTTDLDSGSKKKKTHSKKEIMCQIYRPNTGLQVRHESLFELEKKYRKVASEEAEPHWTEQYDASVNTCSHAYWNGNCRNVSLGNDCEVGLRQRLYHVLAGSVLSVWGRVEHILNTRSNSKMQVIRMKTTEGEKIVGTLIPKSCFEPLVADLRSDSEKQEEFNY</sequence>
<reference evidence="10 11" key="1">
    <citation type="journal article" date="1997" name="Genes Dev.">
        <title>strawberry notch encodes a conserved nuclear protein that functions downstream of Notch and regulates gene expression along the developing wing margin of Drosophila.</title>
        <authorList>
            <person name="Majumdar A."/>
            <person name="Nagaraj R."/>
            <person name="Banerjee U."/>
        </authorList>
    </citation>
    <scope>NUCLEOTIDE SEQUENCE [MRNA] (ISOFORM A)</scope>
    <scope>FUNCTION</scope>
    <scope>SUBCELLULAR LOCATION</scope>
    <scope>TISSUE SPECIFICITY</scope>
    <scope>DEVELOPMENTAL STAGE</scope>
    <scope>DISRUPTION PHENOTYPE</scope>
</reference>
<reference evidence="14" key="2">
    <citation type="journal article" date="2000" name="Science">
        <title>The genome sequence of Drosophila melanogaster.</title>
        <authorList>
            <person name="Adams M.D."/>
            <person name="Celniker S.E."/>
            <person name="Holt R.A."/>
            <person name="Evans C.A."/>
            <person name="Gocayne J.D."/>
            <person name="Amanatides P.G."/>
            <person name="Scherer S.E."/>
            <person name="Li P.W."/>
            <person name="Hoskins R.A."/>
            <person name="Galle R.F."/>
            <person name="George R.A."/>
            <person name="Lewis S.E."/>
            <person name="Richards S."/>
            <person name="Ashburner M."/>
            <person name="Henderson S.N."/>
            <person name="Sutton G.G."/>
            <person name="Wortman J.R."/>
            <person name="Yandell M.D."/>
            <person name="Zhang Q."/>
            <person name="Chen L.X."/>
            <person name="Brandon R.C."/>
            <person name="Rogers Y.-H.C."/>
            <person name="Blazej R.G."/>
            <person name="Champe M."/>
            <person name="Pfeiffer B.D."/>
            <person name="Wan K.H."/>
            <person name="Doyle C."/>
            <person name="Baxter E.G."/>
            <person name="Helt G."/>
            <person name="Nelson C.R."/>
            <person name="Miklos G.L.G."/>
            <person name="Abril J.F."/>
            <person name="Agbayani A."/>
            <person name="An H.-J."/>
            <person name="Andrews-Pfannkoch C."/>
            <person name="Baldwin D."/>
            <person name="Ballew R.M."/>
            <person name="Basu A."/>
            <person name="Baxendale J."/>
            <person name="Bayraktaroglu L."/>
            <person name="Beasley E.M."/>
            <person name="Beeson K.Y."/>
            <person name="Benos P.V."/>
            <person name="Berman B.P."/>
            <person name="Bhandari D."/>
            <person name="Bolshakov S."/>
            <person name="Borkova D."/>
            <person name="Botchan M.R."/>
            <person name="Bouck J."/>
            <person name="Brokstein P."/>
            <person name="Brottier P."/>
            <person name="Burtis K.C."/>
            <person name="Busam D.A."/>
            <person name="Butler H."/>
            <person name="Cadieu E."/>
            <person name="Center A."/>
            <person name="Chandra I."/>
            <person name="Cherry J.M."/>
            <person name="Cawley S."/>
            <person name="Dahlke C."/>
            <person name="Davenport L.B."/>
            <person name="Davies P."/>
            <person name="de Pablos B."/>
            <person name="Delcher A."/>
            <person name="Deng Z."/>
            <person name="Mays A.D."/>
            <person name="Dew I."/>
            <person name="Dietz S.M."/>
            <person name="Dodson K."/>
            <person name="Doup L.E."/>
            <person name="Downes M."/>
            <person name="Dugan-Rocha S."/>
            <person name="Dunkov B.C."/>
            <person name="Dunn P."/>
            <person name="Durbin K.J."/>
            <person name="Evangelista C.C."/>
            <person name="Ferraz C."/>
            <person name="Ferriera S."/>
            <person name="Fleischmann W."/>
            <person name="Fosler C."/>
            <person name="Gabrielian A.E."/>
            <person name="Garg N.S."/>
            <person name="Gelbart W.M."/>
            <person name="Glasser K."/>
            <person name="Glodek A."/>
            <person name="Gong F."/>
            <person name="Gorrell J.H."/>
            <person name="Gu Z."/>
            <person name="Guan P."/>
            <person name="Harris M."/>
            <person name="Harris N.L."/>
            <person name="Harvey D.A."/>
            <person name="Heiman T.J."/>
            <person name="Hernandez J.R."/>
            <person name="Houck J."/>
            <person name="Hostin D."/>
            <person name="Houston K.A."/>
            <person name="Howland T.J."/>
            <person name="Wei M.-H."/>
            <person name="Ibegwam C."/>
            <person name="Jalali M."/>
            <person name="Kalush F."/>
            <person name="Karpen G.H."/>
            <person name="Ke Z."/>
            <person name="Kennison J.A."/>
            <person name="Ketchum K.A."/>
            <person name="Kimmel B.E."/>
            <person name="Kodira C.D."/>
            <person name="Kraft C.L."/>
            <person name="Kravitz S."/>
            <person name="Kulp D."/>
            <person name="Lai Z."/>
            <person name="Lasko P."/>
            <person name="Lei Y."/>
            <person name="Levitsky A.A."/>
            <person name="Li J.H."/>
            <person name="Li Z."/>
            <person name="Liang Y."/>
            <person name="Lin X."/>
            <person name="Liu X."/>
            <person name="Mattei B."/>
            <person name="McIntosh T.C."/>
            <person name="McLeod M.P."/>
            <person name="McPherson D."/>
            <person name="Merkulov G."/>
            <person name="Milshina N.V."/>
            <person name="Mobarry C."/>
            <person name="Morris J."/>
            <person name="Moshrefi A."/>
            <person name="Mount S.M."/>
            <person name="Moy M."/>
            <person name="Murphy B."/>
            <person name="Murphy L."/>
            <person name="Muzny D.M."/>
            <person name="Nelson D.L."/>
            <person name="Nelson D.R."/>
            <person name="Nelson K.A."/>
            <person name="Nixon K."/>
            <person name="Nusskern D.R."/>
            <person name="Pacleb J.M."/>
            <person name="Palazzolo M."/>
            <person name="Pittman G.S."/>
            <person name="Pan S."/>
            <person name="Pollard J."/>
            <person name="Puri V."/>
            <person name="Reese M.G."/>
            <person name="Reinert K."/>
            <person name="Remington K."/>
            <person name="Saunders R.D.C."/>
            <person name="Scheeler F."/>
            <person name="Shen H."/>
            <person name="Shue B.C."/>
            <person name="Siden-Kiamos I."/>
            <person name="Simpson M."/>
            <person name="Skupski M.P."/>
            <person name="Smith T.J."/>
            <person name="Spier E."/>
            <person name="Spradling A.C."/>
            <person name="Stapleton M."/>
            <person name="Strong R."/>
            <person name="Sun E."/>
            <person name="Svirskas R."/>
            <person name="Tector C."/>
            <person name="Turner R."/>
            <person name="Venter E."/>
            <person name="Wang A.H."/>
            <person name="Wang X."/>
            <person name="Wang Z.-Y."/>
            <person name="Wassarman D.A."/>
            <person name="Weinstock G.M."/>
            <person name="Weissenbach J."/>
            <person name="Williams S.M."/>
            <person name="Woodage T."/>
            <person name="Worley K.C."/>
            <person name="Wu D."/>
            <person name="Yang S."/>
            <person name="Yao Q.A."/>
            <person name="Ye J."/>
            <person name="Yeh R.-F."/>
            <person name="Zaveri J.S."/>
            <person name="Zhan M."/>
            <person name="Zhang G."/>
            <person name="Zhao Q."/>
            <person name="Zheng L."/>
            <person name="Zheng X.H."/>
            <person name="Zhong F.N."/>
            <person name="Zhong W."/>
            <person name="Zhou X."/>
            <person name="Zhu S.C."/>
            <person name="Zhu X."/>
            <person name="Smith H.O."/>
            <person name="Gibbs R.A."/>
            <person name="Myers E.W."/>
            <person name="Rubin G.M."/>
            <person name="Venter J.C."/>
        </authorList>
    </citation>
    <scope>NUCLEOTIDE SEQUENCE [LARGE SCALE GENOMIC DNA]</scope>
    <source>
        <strain evidence="3">Berkeley</strain>
    </source>
</reference>
<reference evidence="10 14" key="3">
    <citation type="journal article" date="2002" name="Genome Biol.">
        <title>Annotation of the Drosophila melanogaster euchromatic genome: a systematic review.</title>
        <authorList>
            <person name="Misra S."/>
            <person name="Crosby M.A."/>
            <person name="Mungall C.J."/>
            <person name="Matthews B.B."/>
            <person name="Campbell K.S."/>
            <person name="Hradecky P."/>
            <person name="Huang Y."/>
            <person name="Kaminker J.S."/>
            <person name="Millburn G.H."/>
            <person name="Prochnik S.E."/>
            <person name="Smith C.D."/>
            <person name="Tupy J.L."/>
            <person name="Whitfield E.J."/>
            <person name="Bayraktaroglu L."/>
            <person name="Berman B.P."/>
            <person name="Bettencourt B.R."/>
            <person name="Celniker S.E."/>
            <person name="de Grey A.D.N.J."/>
            <person name="Drysdale R.A."/>
            <person name="Harris N.L."/>
            <person name="Richter J."/>
            <person name="Russo S."/>
            <person name="Schroeder A.J."/>
            <person name="Shu S.Q."/>
            <person name="Stapleton M."/>
            <person name="Yamada C."/>
            <person name="Ashburner M."/>
            <person name="Gelbart W.M."/>
            <person name="Rubin G.M."/>
            <person name="Lewis S.E."/>
        </authorList>
    </citation>
    <scope>GENOME REANNOTATION</scope>
    <scope>ALTERNATIVE SPLICING</scope>
    <source>
        <strain>Berkeley</strain>
    </source>
</reference>
<reference evidence="10 12 13" key="4">
    <citation type="journal article" date="2002" name="Genome Biol.">
        <title>A Drosophila full-length cDNA resource.</title>
        <authorList>
            <person name="Stapleton M."/>
            <person name="Carlson J.W."/>
            <person name="Brokstein P."/>
            <person name="Yu C."/>
            <person name="Champe M."/>
            <person name="George R.A."/>
            <person name="Guarin H."/>
            <person name="Kronmiller B."/>
            <person name="Pacleb J.M."/>
            <person name="Park S."/>
            <person name="Wan K.H."/>
            <person name="Rubin G.M."/>
            <person name="Celniker S.E."/>
        </authorList>
    </citation>
    <scope>NUCLEOTIDE SEQUENCE [LARGE SCALE MRNA] (ISOFORM A)</scope>
    <scope>NUCLEOTIDE SEQUENCE [LARGE SCALE MRNA] OF 1018-1653 (ISOFORM A/B)</scope>
    <scope>NUCLEOTIDE SEQUENCE [LARGE SCALE MRNA] OF 1-187</scope>
    <source>
        <strain evidence="13">Berkeley</strain>
        <tissue evidence="6">Ovary</tissue>
    </source>
</reference>
<reference key="5">
    <citation type="journal article" date="1993" name="Development">
        <title>The strawberry notch gene functions with Notch in common developmental pathways.</title>
        <authorList>
            <person name="Coyle-Thompson C.A."/>
            <person name="Banerjee U."/>
        </authorList>
    </citation>
    <scope>FUNCTION</scope>
    <scope>DEVELOPMENTAL STAGE</scope>
</reference>
<reference key="6">
    <citation type="journal article" date="2001" name="Mech. Dev.">
        <title>Scalloped and strawberry notch are target genes of Notch signaling in the context of wing margin formation in Drosophila.</title>
        <authorList>
            <person name="Nagel A.C."/>
            <person name="Wech I."/>
            <person name="Preiss A."/>
        </authorList>
    </citation>
    <scope>FUNCTION</scope>
    <scope>INTERACTION WITH VG</scope>
    <scope>TISSUE SPECIFICITY</scope>
</reference>
<reference key="7">
    <citation type="journal article" date="2002" name="Cell">
        <title>An EGFR/Ebi/Sno pathway promotes delta expression by inactivating Su(H)/SMRTER repression during inductive notch signaling.</title>
        <authorList>
            <person name="Tsuda L."/>
            <person name="Nagaraj R."/>
            <person name="Zipursky S.L."/>
            <person name="Banerjee U."/>
        </authorList>
    </citation>
    <scope>FUNCTION</scope>
    <scope>INTERACTION WITH SU(H)</scope>
    <scope>TISSUE SPECIFICITY</scope>
</reference>
<reference key="8">
    <citation type="journal article" date="2008" name="J. Proteome Res.">
        <title>Phosphoproteome analysis of Drosophila melanogaster embryos.</title>
        <authorList>
            <person name="Zhai B."/>
            <person name="Villen J."/>
            <person name="Beausoleil S.A."/>
            <person name="Mintseris J."/>
            <person name="Gygi S.P."/>
        </authorList>
    </citation>
    <scope>PHOSPHORYLATION [LARGE SCALE ANALYSIS] AT SER-24; SER-26; SER-929 AND SER-931</scope>
    <scope>IDENTIFICATION BY MASS SPECTROMETRY</scope>
    <source>
        <tissue>Embryo</tissue>
    </source>
</reference>
<organism>
    <name type="scientific">Drosophila melanogaster</name>
    <name type="common">Fruit fly</name>
    <dbReference type="NCBI Taxonomy" id="7227"/>
    <lineage>
        <taxon>Eukaryota</taxon>
        <taxon>Metazoa</taxon>
        <taxon>Ecdysozoa</taxon>
        <taxon>Arthropoda</taxon>
        <taxon>Hexapoda</taxon>
        <taxon>Insecta</taxon>
        <taxon>Pterygota</taxon>
        <taxon>Neoptera</taxon>
        <taxon>Endopterygota</taxon>
        <taxon>Diptera</taxon>
        <taxon>Brachycera</taxon>
        <taxon>Muscomorpha</taxon>
        <taxon>Ephydroidea</taxon>
        <taxon>Drosophilidae</taxon>
        <taxon>Drosophila</taxon>
        <taxon>Sophophora</taxon>
    </lineage>
</organism>
<gene>
    <name evidence="15" type="primary">sno</name>
    <name evidence="15" type="ORF">CG44436</name>
</gene>
<keyword id="KW-0025">Alternative splicing</keyword>
<keyword id="KW-0175">Coiled coil</keyword>
<keyword id="KW-0914">Notch signaling pathway</keyword>
<keyword id="KW-0539">Nucleus</keyword>
<keyword id="KW-0597">Phosphoprotein</keyword>
<keyword id="KW-1185">Reference proteome</keyword>
<feature type="chain" id="PRO_0000328929" description="Protein strawberry notch">
    <location>
        <begin position="1"/>
        <end position="1653"/>
    </location>
</feature>
<feature type="region of interest" description="Disordered" evidence="2">
    <location>
        <begin position="1"/>
        <end position="46"/>
    </location>
</feature>
<feature type="region of interest" description="Disordered" evidence="2">
    <location>
        <begin position="190"/>
        <end position="211"/>
    </location>
</feature>
<feature type="region of interest" description="Disordered" evidence="2">
    <location>
        <begin position="237"/>
        <end position="265"/>
    </location>
</feature>
<feature type="region of interest" description="Disordered" evidence="2">
    <location>
        <begin position="317"/>
        <end position="345"/>
    </location>
</feature>
<feature type="region of interest" description="Disordered" evidence="2">
    <location>
        <begin position="883"/>
        <end position="1043"/>
    </location>
</feature>
<feature type="coiled-coil region" evidence="1">
    <location>
        <begin position="1064"/>
        <end position="1125"/>
    </location>
</feature>
<feature type="compositionally biased region" description="Acidic residues" evidence="2">
    <location>
        <begin position="11"/>
        <end position="36"/>
    </location>
</feature>
<feature type="compositionally biased region" description="Polar residues" evidence="2">
    <location>
        <begin position="194"/>
        <end position="205"/>
    </location>
</feature>
<feature type="compositionally biased region" description="Low complexity" evidence="2">
    <location>
        <begin position="256"/>
        <end position="265"/>
    </location>
</feature>
<feature type="compositionally biased region" description="Gly residues" evidence="2">
    <location>
        <begin position="329"/>
        <end position="342"/>
    </location>
</feature>
<feature type="compositionally biased region" description="Low complexity" evidence="2">
    <location>
        <begin position="883"/>
        <end position="901"/>
    </location>
</feature>
<feature type="compositionally biased region" description="Acidic residues" evidence="2">
    <location>
        <begin position="966"/>
        <end position="975"/>
    </location>
</feature>
<feature type="compositionally biased region" description="Polar residues" evidence="2">
    <location>
        <begin position="980"/>
        <end position="998"/>
    </location>
</feature>
<feature type="compositionally biased region" description="Basic residues" evidence="2">
    <location>
        <begin position="1008"/>
        <end position="1027"/>
    </location>
</feature>
<feature type="modified residue" description="Phosphoserine" evidence="7">
    <location>
        <position position="24"/>
    </location>
</feature>
<feature type="modified residue" description="Phosphoserine" evidence="7">
    <location>
        <position position="26"/>
    </location>
</feature>
<feature type="modified residue" description="Phosphoserine" evidence="7">
    <location>
        <position position="929"/>
    </location>
</feature>
<feature type="modified residue" description="Phosphoserine" evidence="7">
    <location>
        <position position="931"/>
    </location>
</feature>
<feature type="splice variant" id="VSP_058149" description="In isoform A." evidence="10">
    <original>AMGSPAARSSGNAGTTGSSQGGAIGSTSSYLNSLTTNELMNLAAYVAAKGSNAPPPPPPSTAANSVRHSPTGGIPNPGGNFFGGSAAASTSASAANFNMAASLLAQM</original>
    <variation>V</variation>
    <location>
        <begin position="188"/>
        <end position="294"/>
    </location>
</feature>
<feature type="sequence conflict" description="In Ref. 1; AAB54001." evidence="10" ref="1">
    <original>A</original>
    <variation>T</variation>
    <location>
        <position position="956"/>
    </location>
</feature>
<feature type="sequence conflict" description="In Ref. 1; AAB54001." evidence="10" ref="1">
    <original>V</original>
    <variation>M</variation>
    <location>
        <position position="1422"/>
    </location>
</feature>
<feature type="sequence conflict" description="In Ref. 1; AAB54001." evidence="10" ref="1">
    <original>S</original>
    <variation>R</variation>
    <location>
        <position position="1499"/>
    </location>
</feature>
<feature type="sequence conflict" description="In Ref. 4; AAM27487." evidence="10" ref="4">
    <original>S</original>
    <variation>I</variation>
    <location>
        <position position="1609"/>
    </location>
</feature>
<name>SBNO_DROME</name>
<protein>
    <recommendedName>
        <fullName>Protein strawberry notch</fullName>
    </recommendedName>
</protein>